<feature type="chain" id="PRO_0000145788" description="Coenzyme F420:L-glutamate ligase">
    <location>
        <begin position="1"/>
        <end position="254"/>
    </location>
</feature>
<feature type="binding site" evidence="1">
    <location>
        <begin position="11"/>
        <end position="14"/>
    </location>
    <ligand>
        <name>GTP</name>
        <dbReference type="ChEBI" id="CHEBI:37565"/>
    </ligand>
</feature>
<feature type="binding site" evidence="1">
    <location>
        <begin position="40"/>
        <end position="41"/>
    </location>
    <ligand>
        <name>GTP</name>
        <dbReference type="ChEBI" id="CHEBI:37565"/>
    </ligand>
</feature>
<feature type="binding site" evidence="1">
    <location>
        <position position="45"/>
    </location>
    <ligand>
        <name>GTP</name>
        <dbReference type="ChEBI" id="CHEBI:37565"/>
    </ligand>
</feature>
<feature type="binding site" evidence="1">
    <location>
        <position position="109"/>
    </location>
    <ligand>
        <name>a divalent metal cation</name>
        <dbReference type="ChEBI" id="CHEBI:60240"/>
        <label>1</label>
    </ligand>
</feature>
<feature type="binding site" evidence="1">
    <location>
        <position position="112"/>
    </location>
    <ligand>
        <name>GTP</name>
        <dbReference type="ChEBI" id="CHEBI:37565"/>
    </ligand>
</feature>
<feature type="binding site" evidence="1">
    <location>
        <position position="150"/>
    </location>
    <ligand>
        <name>a divalent metal cation</name>
        <dbReference type="ChEBI" id="CHEBI:60240"/>
        <label>1</label>
    </ligand>
</feature>
<feature type="binding site" evidence="1">
    <location>
        <position position="151"/>
    </location>
    <ligand>
        <name>a divalent metal cation</name>
        <dbReference type="ChEBI" id="CHEBI:60240"/>
        <label>2</label>
    </ligand>
</feature>
<feature type="binding site" evidence="1">
    <location>
        <begin position="206"/>
        <end position="213"/>
    </location>
    <ligand>
        <name>GTP</name>
        <dbReference type="ChEBI" id="CHEBI:37565"/>
    </ligand>
</feature>
<feature type="binding site" evidence="1">
    <location>
        <position position="208"/>
    </location>
    <ligand>
        <name>a divalent metal cation</name>
        <dbReference type="ChEBI" id="CHEBI:60240"/>
        <label>2</label>
    </ligand>
</feature>
<accession>Q8TUD3</accession>
<reference key="1">
    <citation type="journal article" date="2002" name="Genome Res.">
        <title>The genome of Methanosarcina acetivorans reveals extensive metabolic and physiological diversity.</title>
        <authorList>
            <person name="Galagan J.E."/>
            <person name="Nusbaum C."/>
            <person name="Roy A."/>
            <person name="Endrizzi M.G."/>
            <person name="Macdonald P."/>
            <person name="FitzHugh W."/>
            <person name="Calvo S."/>
            <person name="Engels R."/>
            <person name="Smirnov S."/>
            <person name="Atnoor D."/>
            <person name="Brown A."/>
            <person name="Allen N."/>
            <person name="Naylor J."/>
            <person name="Stange-Thomann N."/>
            <person name="DeArellano K."/>
            <person name="Johnson R."/>
            <person name="Linton L."/>
            <person name="McEwan P."/>
            <person name="McKernan K."/>
            <person name="Talamas J."/>
            <person name="Tirrell A."/>
            <person name="Ye W."/>
            <person name="Zimmer A."/>
            <person name="Barber R.D."/>
            <person name="Cann I."/>
            <person name="Graham D.E."/>
            <person name="Grahame D.A."/>
            <person name="Guss A.M."/>
            <person name="Hedderich R."/>
            <person name="Ingram-Smith C."/>
            <person name="Kuettner H.C."/>
            <person name="Krzycki J.A."/>
            <person name="Leigh J.A."/>
            <person name="Li W."/>
            <person name="Liu J."/>
            <person name="Mukhopadhyay B."/>
            <person name="Reeve J.N."/>
            <person name="Smith K."/>
            <person name="Springer T.A."/>
            <person name="Umayam L.A."/>
            <person name="White O."/>
            <person name="White R.H."/>
            <person name="de Macario E.C."/>
            <person name="Ferry J.G."/>
            <person name="Jarrell K.F."/>
            <person name="Jing H."/>
            <person name="Macario A.J.L."/>
            <person name="Paulsen I.T."/>
            <person name="Pritchett M."/>
            <person name="Sowers K.R."/>
            <person name="Swanson R.V."/>
            <person name="Zinder S.H."/>
            <person name="Lander E."/>
            <person name="Metcalf W.W."/>
            <person name="Birren B."/>
        </authorList>
    </citation>
    <scope>NUCLEOTIDE SEQUENCE [LARGE SCALE GENOMIC DNA]</scope>
    <source>
        <strain>ATCC 35395 / DSM 2834 / JCM 12185 / C2A</strain>
    </source>
</reference>
<sequence>MKFEAIAVEKIPLIRKGDDLPYIICERIELQDRDIIVIASTIVAKAEGETFRLEDITPGEEALAIASRTGKDARFIQAVLSRSREVFVEAPFMLVTTLAGHTCVNAGVDESNIEHGFLLYPPKNPDSSASKLGERLESISGKKLSVIITDTNGRAFKIGQTGVAIGIYKIKPIKRWIGEKDLFDKVLEITEEAVADELAGAANLLMGEGAGGIPVAVIRGLDYYCEEEISMSENYRPEDMDVIKKGLRCLQKKN</sequence>
<organism>
    <name type="scientific">Methanosarcina acetivorans (strain ATCC 35395 / DSM 2834 / JCM 12185 / C2A)</name>
    <dbReference type="NCBI Taxonomy" id="188937"/>
    <lineage>
        <taxon>Archaea</taxon>
        <taxon>Methanobacteriati</taxon>
        <taxon>Methanobacteriota</taxon>
        <taxon>Stenosarchaea group</taxon>
        <taxon>Methanomicrobia</taxon>
        <taxon>Methanosarcinales</taxon>
        <taxon>Methanosarcinaceae</taxon>
        <taxon>Methanosarcina</taxon>
    </lineage>
</organism>
<gene>
    <name evidence="1" type="primary">cofE</name>
    <name type="ordered locus">MA_0135</name>
</gene>
<evidence type="ECO:0000255" key="1">
    <source>
        <dbReference type="HAMAP-Rule" id="MF_01258"/>
    </source>
</evidence>
<name>COFE_METAC</name>
<protein>
    <recommendedName>
        <fullName evidence="1">Coenzyme F420:L-glutamate ligase</fullName>
        <ecNumber evidence="1">6.3.2.31</ecNumber>
        <ecNumber evidence="1">6.3.2.34</ecNumber>
    </recommendedName>
    <alternativeName>
        <fullName evidence="1">Coenzyme F420-0:L-glutamate ligase</fullName>
    </alternativeName>
    <alternativeName>
        <fullName evidence="1">Coenzyme F420-1:gamma-L-glutamate ligase</fullName>
    </alternativeName>
</protein>
<proteinExistence type="inferred from homology"/>
<keyword id="KW-0342">GTP-binding</keyword>
<keyword id="KW-0436">Ligase</keyword>
<keyword id="KW-0460">Magnesium</keyword>
<keyword id="KW-0464">Manganese</keyword>
<keyword id="KW-0479">Metal-binding</keyword>
<keyword id="KW-0547">Nucleotide-binding</keyword>
<keyword id="KW-0630">Potassium</keyword>
<keyword id="KW-1185">Reference proteome</keyword>
<dbReference type="EC" id="6.3.2.31" evidence="1"/>
<dbReference type="EC" id="6.3.2.34" evidence="1"/>
<dbReference type="EMBL" id="AE010299">
    <property type="protein sequence ID" value="AAM03589.1"/>
    <property type="molecule type" value="Genomic_DNA"/>
</dbReference>
<dbReference type="RefSeq" id="WP_011020194.1">
    <property type="nucleotide sequence ID" value="NC_003552.1"/>
</dbReference>
<dbReference type="SMR" id="Q8TUD3"/>
<dbReference type="FunCoup" id="Q8TUD3">
    <property type="interactions" value="94"/>
</dbReference>
<dbReference type="STRING" id="188937.MA_0135"/>
<dbReference type="EnsemblBacteria" id="AAM03589">
    <property type="protein sequence ID" value="AAM03589"/>
    <property type="gene ID" value="MA_0135"/>
</dbReference>
<dbReference type="GeneID" id="1472027"/>
<dbReference type="KEGG" id="mac:MA_0135"/>
<dbReference type="HOGENOM" id="CLU_051152_1_1_2"/>
<dbReference type="InParanoid" id="Q8TUD3"/>
<dbReference type="OrthoDB" id="11383at2157"/>
<dbReference type="PhylomeDB" id="Q8TUD3"/>
<dbReference type="UniPathway" id="UPA00071"/>
<dbReference type="Proteomes" id="UP000002487">
    <property type="component" value="Chromosome"/>
</dbReference>
<dbReference type="GO" id="GO:0052618">
    <property type="term" value="F:coenzyme F420-0:L-glutamate ligase activity"/>
    <property type="evidence" value="ECO:0000318"/>
    <property type="project" value="GO_Central"/>
</dbReference>
<dbReference type="GO" id="GO:0052619">
    <property type="term" value="F:coenzyme F420-1:gamma-L-glutamate ligase activity"/>
    <property type="evidence" value="ECO:0007669"/>
    <property type="project" value="UniProtKB-UniRule"/>
</dbReference>
<dbReference type="GO" id="GO:0005525">
    <property type="term" value="F:GTP binding"/>
    <property type="evidence" value="ECO:0007669"/>
    <property type="project" value="UniProtKB-KW"/>
</dbReference>
<dbReference type="GO" id="GO:0046872">
    <property type="term" value="F:metal ion binding"/>
    <property type="evidence" value="ECO:0007669"/>
    <property type="project" value="UniProtKB-KW"/>
</dbReference>
<dbReference type="GO" id="GO:0052645">
    <property type="term" value="P:F420-0 metabolic process"/>
    <property type="evidence" value="ECO:0007669"/>
    <property type="project" value="UniProtKB-UniRule"/>
</dbReference>
<dbReference type="Gene3D" id="3.30.1330.100">
    <property type="entry name" value="CofE-like"/>
    <property type="match status" value="1"/>
</dbReference>
<dbReference type="Gene3D" id="3.90.1660.10">
    <property type="entry name" value="CofE-like domain"/>
    <property type="match status" value="1"/>
</dbReference>
<dbReference type="HAMAP" id="MF_01258">
    <property type="entry name" value="F420_ligase_CofE"/>
    <property type="match status" value="1"/>
</dbReference>
<dbReference type="InterPro" id="IPR008225">
    <property type="entry name" value="F420-0_g-glutamyl_ligase"/>
</dbReference>
<dbReference type="InterPro" id="IPR002847">
    <property type="entry name" value="F420-0_gamma-glut_ligase-dom"/>
</dbReference>
<dbReference type="InterPro" id="IPR023659">
    <property type="entry name" value="F420_ligase_CofE_arc"/>
</dbReference>
<dbReference type="NCBIfam" id="TIGR01916">
    <property type="entry name" value="F420_cofE"/>
    <property type="match status" value="1"/>
</dbReference>
<dbReference type="NCBIfam" id="NF009809">
    <property type="entry name" value="PRK13293.1"/>
    <property type="match status" value="1"/>
</dbReference>
<dbReference type="PANTHER" id="PTHR47917">
    <property type="match status" value="1"/>
</dbReference>
<dbReference type="PANTHER" id="PTHR47917:SF1">
    <property type="entry name" value="COENZYME F420:L-GLUTAMATE LIGASE"/>
    <property type="match status" value="1"/>
</dbReference>
<dbReference type="Pfam" id="PF01996">
    <property type="entry name" value="F420_ligase"/>
    <property type="match status" value="1"/>
</dbReference>
<dbReference type="SUPFAM" id="SSF144010">
    <property type="entry name" value="CofE-like"/>
    <property type="match status" value="1"/>
</dbReference>
<comment type="function">
    <text evidence="1">Catalyzes the GTP-dependent successive addition of two or more gamma-linked L-glutamates to the L-lactyl phosphodiester of 7,8-didemethyl-8-hydroxy-5-deazariboflavin (F420-0) to form coenzyme F420-0-glutamyl-glutamate (F420-2) or polyglutamated F420 derivatives.</text>
</comment>
<comment type="catalytic activity">
    <reaction evidence="1">
        <text>oxidized coenzyme F420-0 + GTP + L-glutamate = oxidized coenzyme F420-1 + GDP + phosphate + H(+)</text>
        <dbReference type="Rhea" id="RHEA:30555"/>
        <dbReference type="ChEBI" id="CHEBI:15378"/>
        <dbReference type="ChEBI" id="CHEBI:29985"/>
        <dbReference type="ChEBI" id="CHEBI:37565"/>
        <dbReference type="ChEBI" id="CHEBI:43474"/>
        <dbReference type="ChEBI" id="CHEBI:58189"/>
        <dbReference type="ChEBI" id="CHEBI:59907"/>
        <dbReference type="ChEBI" id="CHEBI:59920"/>
        <dbReference type="EC" id="6.3.2.31"/>
    </reaction>
</comment>
<comment type="catalytic activity">
    <reaction evidence="1">
        <text>oxidized coenzyme F420-1 + GTP + L-glutamate = oxidized coenzyme F420-2 + GDP + phosphate + H(+)</text>
        <dbReference type="Rhea" id="RHEA:30523"/>
        <dbReference type="ChEBI" id="CHEBI:15378"/>
        <dbReference type="ChEBI" id="CHEBI:29985"/>
        <dbReference type="ChEBI" id="CHEBI:37565"/>
        <dbReference type="ChEBI" id="CHEBI:43474"/>
        <dbReference type="ChEBI" id="CHEBI:57922"/>
        <dbReference type="ChEBI" id="CHEBI:58189"/>
        <dbReference type="ChEBI" id="CHEBI:59920"/>
        <dbReference type="EC" id="6.3.2.34"/>
    </reaction>
</comment>
<comment type="cofactor">
    <cofactor evidence="1">
        <name>Mg(2+)</name>
        <dbReference type="ChEBI" id="CHEBI:18420"/>
    </cofactor>
    <cofactor evidence="1">
        <name>Mn(2+)</name>
        <dbReference type="ChEBI" id="CHEBI:29035"/>
    </cofactor>
    <text evidence="1">Binds 2 divalent metal cations per subunit. The ions could be magnesium and/or manganese.</text>
</comment>
<comment type="cofactor">
    <cofactor evidence="1">
        <name>K(+)</name>
        <dbReference type="ChEBI" id="CHEBI:29103"/>
    </cofactor>
    <text evidence="1">Monovalent cation. The ion could be potassium.</text>
</comment>
<comment type="pathway">
    <text evidence="1">Cofactor biosynthesis; coenzyme F420 biosynthesis.</text>
</comment>
<comment type="subunit">
    <text evidence="1">Homodimer.</text>
</comment>
<comment type="similarity">
    <text evidence="1">Belongs to the CofE family.</text>
</comment>